<keyword id="KW-0002">3D-structure</keyword>
<keyword id="KW-0025">Alternative splicing</keyword>
<keyword id="KW-0106">Calcium</keyword>
<keyword id="KW-0903">Direct protein sequencing</keyword>
<keyword id="KW-0225">Disease variant</keyword>
<keyword id="KW-1015">Disulfide bond</keyword>
<keyword id="KW-0242">Dwarfism</keyword>
<keyword id="KW-0245">EGF-like domain</keyword>
<keyword id="KW-0272">Extracellular matrix</keyword>
<keyword id="KW-0325">Glycoprotein</keyword>
<keyword id="KW-0393">Immunoglobulin domain</keyword>
<keyword id="KW-0430">Lectin</keyword>
<keyword id="KW-0479">Metal-binding</keyword>
<keyword id="KW-0654">Proteoglycan</keyword>
<keyword id="KW-1267">Proteomics identification</keyword>
<keyword id="KW-1185">Reference proteome</keyword>
<keyword id="KW-0677">Repeat</keyword>
<keyword id="KW-0964">Secreted</keyword>
<keyword id="KW-0732">Signal</keyword>
<keyword id="KW-0768">Sushi</keyword>
<name>PGCA_HUMAN</name>
<gene>
    <name type="primary">ACAN</name>
    <name type="synonym">AGC1</name>
    <name type="synonym">CSPG1</name>
    <name type="synonym">MSK16</name>
</gene>
<accession>P16112</accession>
<accession>B9EK55</accession>
<accession>E7ENV9</accession>
<accession>E7EX88</accession>
<accession>H0YM81</accession>
<accession>H0YMF1</accession>
<accession>Q13650</accession>
<accession>Q9UCD3</accession>
<accession>Q9UCP4</accession>
<accession>Q9UCP5</accession>
<accession>Q9UDE0</accession>
<feature type="signal peptide" evidence="24">
    <location>
        <begin position="1"/>
        <end position="16"/>
    </location>
</feature>
<feature type="chain" id="PRO_0000017505" description="Aggrecan core protein">
    <location>
        <begin position="17"/>
        <end position="2530"/>
    </location>
</feature>
<feature type="chain" id="PRO_0000017506" description="Aggrecan core protein 2">
    <location>
        <begin position="393"/>
        <end position="2530"/>
    </location>
</feature>
<feature type="domain" description="Ig-like V-type">
    <location>
        <begin position="34"/>
        <end position="147"/>
    </location>
</feature>
<feature type="domain" description="Link 1" evidence="10">
    <location>
        <begin position="153"/>
        <end position="248"/>
    </location>
</feature>
<feature type="domain" description="Link 2" evidence="10">
    <location>
        <begin position="254"/>
        <end position="350"/>
    </location>
</feature>
<feature type="domain" description="Link 3" evidence="10">
    <location>
        <begin position="478"/>
        <end position="573"/>
    </location>
</feature>
<feature type="domain" description="Link 4" evidence="10">
    <location>
        <begin position="579"/>
        <end position="675"/>
    </location>
</feature>
<feature type="repeat" description="1-1">
    <location>
        <begin position="773"/>
        <end position="778"/>
    </location>
</feature>
<feature type="repeat" description="1-2">
    <location>
        <begin position="779"/>
        <end position="784"/>
    </location>
</feature>
<feature type="repeat" description="1-3">
    <location>
        <begin position="785"/>
        <end position="790"/>
    </location>
</feature>
<feature type="repeat" description="1-4">
    <location>
        <begin position="791"/>
        <end position="796"/>
    </location>
</feature>
<feature type="repeat" description="1-5">
    <location>
        <begin position="797"/>
        <end position="802"/>
    </location>
</feature>
<feature type="repeat" description="1-6">
    <location>
        <begin position="803"/>
        <end position="808"/>
    </location>
</feature>
<feature type="repeat" description="1-7; approximate">
    <location>
        <begin position="809"/>
        <end position="814"/>
    </location>
</feature>
<feature type="repeat" description="1-8; approximate">
    <location>
        <begin position="815"/>
        <end position="820"/>
    </location>
</feature>
<feature type="repeat" description="1-9">
    <location>
        <begin position="821"/>
        <end position="826"/>
    </location>
</feature>
<feature type="repeat" description="1-10; approximate">
    <location>
        <begin position="827"/>
        <end position="832"/>
    </location>
</feature>
<feature type="repeat" description="1-11">
    <location>
        <begin position="833"/>
        <end position="838"/>
    </location>
</feature>
<feature type="repeat" description="1-12">
    <location>
        <begin position="839"/>
        <end position="844"/>
    </location>
</feature>
<feature type="repeat" description="2-1">
    <location>
        <begin position="942"/>
        <end position="960"/>
    </location>
</feature>
<feature type="repeat" description="2-2">
    <location>
        <begin position="961"/>
        <end position="979"/>
    </location>
</feature>
<feature type="repeat" description="2-3">
    <location>
        <begin position="980"/>
        <end position="998"/>
    </location>
</feature>
<feature type="repeat" description="2-4">
    <location>
        <begin position="999"/>
        <end position="1017"/>
    </location>
</feature>
<feature type="repeat" description="2-5">
    <location>
        <begin position="1018"/>
        <end position="1036"/>
    </location>
</feature>
<feature type="repeat" description="2-6">
    <location>
        <begin position="1037"/>
        <end position="1055"/>
    </location>
</feature>
<feature type="repeat" description="2-7">
    <location>
        <begin position="1056"/>
        <end position="1074"/>
    </location>
</feature>
<feature type="repeat" description="2-8">
    <location>
        <begin position="1075"/>
        <end position="1093"/>
    </location>
</feature>
<feature type="repeat" description="2-9">
    <location>
        <begin position="1094"/>
        <end position="1112"/>
    </location>
</feature>
<feature type="repeat" description="2-10">
    <location>
        <begin position="1113"/>
        <end position="1131"/>
    </location>
</feature>
<feature type="repeat" description="2-11">
    <location>
        <begin position="1132"/>
        <end position="1150"/>
    </location>
</feature>
<feature type="repeat" description="2-12">
    <location>
        <begin position="1151"/>
        <end position="1169"/>
    </location>
</feature>
<feature type="repeat" description="2-13">
    <location>
        <begin position="1170"/>
        <end position="1188"/>
    </location>
</feature>
<feature type="repeat" description="2-14">
    <location>
        <begin position="1189"/>
        <end position="1207"/>
    </location>
</feature>
<feature type="repeat" description="2-15">
    <location>
        <begin position="1208"/>
        <end position="1226"/>
    </location>
</feature>
<feature type="repeat" description="2-16">
    <location>
        <begin position="1227"/>
        <end position="1245"/>
    </location>
</feature>
<feature type="repeat" description="2-17">
    <location>
        <begin position="1246"/>
        <end position="1264"/>
    </location>
</feature>
<feature type="repeat" description="2-18">
    <location>
        <begin position="1265"/>
        <end position="1283"/>
    </location>
</feature>
<feature type="repeat" description="2-19">
    <location>
        <begin position="1284"/>
        <end position="1302"/>
    </location>
</feature>
<feature type="repeat" description="2-20">
    <location>
        <begin position="1303"/>
        <end position="1321"/>
    </location>
</feature>
<feature type="repeat" description="2-21">
    <location>
        <begin position="1322"/>
        <end position="1340"/>
    </location>
</feature>
<feature type="repeat" description="2-22">
    <location>
        <begin position="1341"/>
        <end position="1359"/>
    </location>
</feature>
<feature type="repeat" description="2-23">
    <location>
        <begin position="1360"/>
        <end position="1378"/>
    </location>
</feature>
<feature type="repeat" description="2-24">
    <location>
        <begin position="1379"/>
        <end position="1397"/>
    </location>
</feature>
<feature type="repeat" description="2-25">
    <location>
        <begin position="1398"/>
        <end position="1416"/>
    </location>
</feature>
<feature type="repeat" description="2-26">
    <location>
        <begin position="1417"/>
        <end position="1435"/>
    </location>
</feature>
<feature type="repeat" description="2-27">
    <location>
        <begin position="1436"/>
        <end position="1454"/>
    </location>
</feature>
<feature type="repeat" description="2-28">
    <location>
        <begin position="1455"/>
        <end position="1473"/>
    </location>
</feature>
<feature type="repeat" description="2-29">
    <location>
        <begin position="1475"/>
        <end position="1493"/>
    </location>
</feature>
<feature type="repeat" description="2-30">
    <location>
        <begin position="1494"/>
        <end position="1512"/>
    </location>
</feature>
<feature type="repeat" description="2-31">
    <location>
        <begin position="1513"/>
        <end position="1531"/>
    </location>
</feature>
<feature type="repeat" description="2-32">
    <location>
        <begin position="1533"/>
        <end position="1551"/>
    </location>
</feature>
<feature type="repeat" description="2-33; approximate">
    <location>
        <begin position="1553"/>
        <end position="1572"/>
    </location>
</feature>
<feature type="repeat" description="2-34">
    <location>
        <begin position="1574"/>
        <end position="1592"/>
    </location>
</feature>
<feature type="repeat" description="2-35">
    <location>
        <begin position="1594"/>
        <end position="1612"/>
    </location>
</feature>
<feature type="domain" description="EGF-like" evidence="7">
    <location>
        <begin position="2279"/>
        <end position="2314"/>
    </location>
</feature>
<feature type="domain" description="C-type lectin" evidence="6">
    <location>
        <begin position="2327"/>
        <end position="2441"/>
    </location>
</feature>
<feature type="domain" description="Sushi" evidence="9">
    <location>
        <begin position="2445"/>
        <end position="2505"/>
    </location>
</feature>
<feature type="region of interest" description="G1-A">
    <location>
        <begin position="48"/>
        <end position="141"/>
    </location>
</feature>
<feature type="region of interest" description="G1-B">
    <location>
        <begin position="152"/>
        <end position="247"/>
    </location>
</feature>
<feature type="region of interest" description="G1-B'">
    <location>
        <begin position="253"/>
        <end position="349"/>
    </location>
</feature>
<feature type="region of interest" description="G2-B">
    <location>
        <begin position="477"/>
        <end position="571"/>
    </location>
</feature>
<feature type="region of interest" description="G2-B'">
    <location>
        <begin position="578"/>
        <end position="673"/>
    </location>
</feature>
<feature type="region of interest" description="KS">
    <location>
        <begin position="677"/>
        <end position="849"/>
    </location>
</feature>
<feature type="region of interest" description="Disordered" evidence="11">
    <location>
        <begin position="734"/>
        <end position="979"/>
    </location>
</feature>
<feature type="region of interest" description="12 X 6 AA approximate tandem repeats of E-[GVE]-P-[SFY]-[APT]-[TSP]">
    <location>
        <begin position="773"/>
        <end position="844"/>
    </location>
</feature>
<feature type="region of interest" description="CS-1">
    <location>
        <begin position="852"/>
        <end position="1612"/>
    </location>
</feature>
<feature type="region of interest" description="35 X 19 AA approximate tandem repeats of E-[IVDG]-[LV]-[EV]-[GTI]-[STA]-[ATV]-[SP]-[GA]-[VIFAD]-[GEDL]-[DE]-[LVI]-[SG]-[GERK]-[LV]-P-S-G">
    <location>
        <begin position="942"/>
        <end position="1612"/>
    </location>
</feature>
<feature type="region of interest" description="Disordered" evidence="11">
    <location>
        <begin position="1499"/>
        <end position="1526"/>
    </location>
</feature>
<feature type="region of interest" description="Disordered" evidence="11">
    <location>
        <begin position="1543"/>
        <end position="1649"/>
    </location>
</feature>
<feature type="region of interest" description="CS-2">
    <location>
        <begin position="1613"/>
        <end position="2277"/>
    </location>
</feature>
<feature type="region of interest" description="Disordered" evidence="11">
    <location>
        <begin position="1687"/>
        <end position="1772"/>
    </location>
</feature>
<feature type="region of interest" description="Disordered" evidence="11">
    <location>
        <begin position="1784"/>
        <end position="1827"/>
    </location>
</feature>
<feature type="region of interest" description="Disordered" evidence="11">
    <location>
        <begin position="1883"/>
        <end position="1902"/>
    </location>
</feature>
<feature type="region of interest" description="Disordered" evidence="11">
    <location>
        <begin position="1948"/>
        <end position="1977"/>
    </location>
</feature>
<feature type="region of interest" description="Disordered" evidence="11">
    <location>
        <begin position="2048"/>
        <end position="2204"/>
    </location>
</feature>
<feature type="region of interest" description="Disordered" evidence="11">
    <location>
        <begin position="2249"/>
        <end position="2281"/>
    </location>
</feature>
<feature type="region of interest" description="G3">
    <location>
        <begin position="2278"/>
        <end position="2530"/>
    </location>
</feature>
<feature type="region of interest" description="Disordered" evidence="11">
    <location>
        <begin position="2510"/>
        <end position="2530"/>
    </location>
</feature>
<feature type="compositionally biased region" description="Low complexity" evidence="11">
    <location>
        <begin position="779"/>
        <end position="789"/>
    </location>
</feature>
<feature type="compositionally biased region" description="Pro residues" evidence="11">
    <location>
        <begin position="790"/>
        <end position="810"/>
    </location>
</feature>
<feature type="compositionally biased region" description="Low complexity" evidence="11">
    <location>
        <begin position="811"/>
        <end position="842"/>
    </location>
</feature>
<feature type="compositionally biased region" description="Low complexity" evidence="11">
    <location>
        <begin position="892"/>
        <end position="912"/>
    </location>
</feature>
<feature type="compositionally biased region" description="Polar residues" evidence="11">
    <location>
        <begin position="1713"/>
        <end position="1723"/>
    </location>
</feature>
<feature type="compositionally biased region" description="Polar residues" evidence="11">
    <location>
        <begin position="1746"/>
        <end position="1763"/>
    </location>
</feature>
<feature type="compositionally biased region" description="Low complexity" evidence="11">
    <location>
        <begin position="1817"/>
        <end position="1827"/>
    </location>
</feature>
<feature type="compositionally biased region" description="Polar residues" evidence="11">
    <location>
        <begin position="1883"/>
        <end position="1893"/>
    </location>
</feature>
<feature type="compositionally biased region" description="Polar residues" evidence="11">
    <location>
        <begin position="2062"/>
        <end position="2073"/>
    </location>
</feature>
<feature type="compositionally biased region" description="Low complexity" evidence="11">
    <location>
        <begin position="2087"/>
        <end position="2102"/>
    </location>
</feature>
<feature type="compositionally biased region" description="Low complexity" evidence="11">
    <location>
        <begin position="2144"/>
        <end position="2155"/>
    </location>
</feature>
<feature type="binding site" evidence="1">
    <location>
        <position position="2381"/>
    </location>
    <ligand>
        <name>Ca(2+)</name>
        <dbReference type="ChEBI" id="CHEBI:29108"/>
        <label>1</label>
    </ligand>
</feature>
<feature type="binding site" evidence="1">
    <location>
        <position position="2385"/>
    </location>
    <ligand>
        <name>Ca(2+)</name>
        <dbReference type="ChEBI" id="CHEBI:29108"/>
        <label>1</label>
    </ligand>
</feature>
<feature type="binding site" evidence="1">
    <location>
        <position position="2405"/>
    </location>
    <ligand>
        <name>Ca(2+)</name>
        <dbReference type="ChEBI" id="CHEBI:29108"/>
        <label>2</label>
    </ligand>
</feature>
<feature type="binding site" evidence="1">
    <location>
        <position position="2407"/>
    </location>
    <ligand>
        <name>Ca(2+)</name>
        <dbReference type="ChEBI" id="CHEBI:29108"/>
        <label>2</label>
    </ligand>
</feature>
<feature type="binding site" evidence="1">
    <location>
        <position position="2408"/>
    </location>
    <ligand>
        <name>Ca(2+)</name>
        <dbReference type="ChEBI" id="CHEBI:29108"/>
        <label>1</label>
    </ligand>
</feature>
<feature type="binding site" evidence="1">
    <location>
        <position position="2414"/>
    </location>
    <ligand>
        <name>Ca(2+)</name>
        <dbReference type="ChEBI" id="CHEBI:29108"/>
        <label>1</label>
    </ligand>
</feature>
<feature type="binding site" evidence="1">
    <location>
        <position position="2414"/>
    </location>
    <ligand>
        <name>Ca(2+)</name>
        <dbReference type="ChEBI" id="CHEBI:29108"/>
        <label>2</label>
    </ligand>
</feature>
<feature type="binding site" evidence="1">
    <location>
        <position position="2415"/>
    </location>
    <ligand>
        <name>Ca(2+)</name>
        <dbReference type="ChEBI" id="CHEBI:29108"/>
        <label>1</label>
    </ligand>
</feature>
<feature type="binding site" evidence="1">
    <location>
        <position position="2428"/>
    </location>
    <ligand>
        <name>Ca(2+)</name>
        <dbReference type="ChEBI" id="CHEBI:29108"/>
        <label>2</label>
    </ligand>
</feature>
<feature type="binding site" evidence="1">
    <location>
        <position position="2429"/>
    </location>
    <ligand>
        <name>Ca(2+)</name>
        <dbReference type="ChEBI" id="CHEBI:29108"/>
        <label>2</label>
    </ligand>
</feature>
<feature type="site" description="Cleavage; by aggrecanase">
    <location>
        <begin position="392"/>
        <end position="393"/>
    </location>
</feature>
<feature type="glycosylation site" description="N-linked (GlcNAc...) asparagine" evidence="5">
    <location>
        <position position="126"/>
    </location>
</feature>
<feature type="glycosylation site" description="N-linked (GlcNAc...) asparagine" evidence="5">
    <location>
        <position position="239"/>
    </location>
</feature>
<feature type="glycosylation site" description="N-linked (GlcNAc...) asparagine" evidence="5">
    <location>
        <position position="333"/>
    </location>
</feature>
<feature type="glycosylation site" description="O-linked (Xyl...) (keratan sulfate) threonine" evidence="29">
    <location>
        <position position="371"/>
    </location>
</feature>
<feature type="glycosylation site" description="O-linked (Xyl...) (keratan sulfate) threonine" evidence="29">
    <location>
        <position position="376"/>
    </location>
</feature>
<feature type="glycosylation site" description="N-linked (GlcNAc...) asparagine" evidence="5">
    <location>
        <position position="387"/>
    </location>
</feature>
<feature type="glycosylation site" description="N-linked (GlcNAc...) asparagine" evidence="5">
    <location>
        <position position="434"/>
    </location>
</feature>
<feature type="glycosylation site" description="N-linked (GlcNAc...) asparagine" evidence="5">
    <location>
        <position position="602"/>
    </location>
</feature>
<feature type="glycosylation site" description="N-linked (GlcNAc...) asparagine" evidence="15">
    <location>
        <position position="658"/>
    </location>
</feature>
<feature type="glycosylation site" description="N-linked (GlcNAc...) asparagine" evidence="5">
    <location>
        <position position="738"/>
    </location>
</feature>
<feature type="glycosylation site" description="O-linked (Xyl...) (chondroitin sulfate) serine" evidence="22">
    <location>
        <position position="1530"/>
    </location>
</feature>
<feature type="glycosylation site" description="O-linked (Xyl...) (chondroitin sulfate) serine" evidence="22">
    <location>
        <position position="1567"/>
    </location>
</feature>
<feature type="glycosylation site" description="O-linked (Xyl...) (chondroitin sulfate) serine" evidence="5">
    <location>
        <position position="1581"/>
    </location>
</feature>
<feature type="glycosylation site" description="O-linked (Xyl...) (chondroitin sulfate) serine" evidence="5">
    <location>
        <position position="1587"/>
    </location>
</feature>
<feature type="glycosylation site" description="O-linked (Xyl...) (chondroitin sulfate) serine" evidence="5">
    <location>
        <position position="1591"/>
    </location>
</feature>
<feature type="glycosylation site" description="O-linked (Xyl...) (chondroitin sulfate) serine" evidence="22">
    <location>
        <position position="1601"/>
    </location>
</feature>
<feature type="glycosylation site" description="O-linked (Xyl...) (chondroitin sulfate) serine" evidence="22">
    <location>
        <position position="1703"/>
    </location>
</feature>
<feature type="glycosylation site" description="N-linked (GlcNAc...) asparagine" evidence="5">
    <location>
        <position position="2013"/>
    </location>
</feature>
<feature type="disulfide bond" evidence="8">
    <location>
        <begin position="51"/>
        <end position="133"/>
    </location>
</feature>
<feature type="disulfide bond" evidence="10">
    <location>
        <begin position="175"/>
        <end position="246"/>
    </location>
</feature>
<feature type="disulfide bond" evidence="10">
    <location>
        <begin position="199"/>
        <end position="220"/>
    </location>
</feature>
<feature type="disulfide bond" evidence="10">
    <location>
        <begin position="273"/>
        <end position="348"/>
    </location>
</feature>
<feature type="disulfide bond" evidence="10">
    <location>
        <begin position="297"/>
        <end position="318"/>
    </location>
</feature>
<feature type="disulfide bond" evidence="10">
    <location>
        <begin position="500"/>
        <end position="571"/>
    </location>
</feature>
<feature type="disulfide bond" evidence="10">
    <location>
        <begin position="524"/>
        <end position="545"/>
    </location>
</feature>
<feature type="disulfide bond" evidence="10">
    <location>
        <begin position="598"/>
        <end position="673"/>
    </location>
</feature>
<feature type="disulfide bond" evidence="10">
    <location>
        <begin position="622"/>
        <end position="643"/>
    </location>
</feature>
<feature type="disulfide bond" evidence="7">
    <location>
        <begin position="2283"/>
        <end position="2293"/>
    </location>
</feature>
<feature type="disulfide bond" evidence="7">
    <location>
        <begin position="2288"/>
        <end position="2302"/>
    </location>
</feature>
<feature type="disulfide bond" evidence="7">
    <location>
        <begin position="2304"/>
        <end position="2313"/>
    </location>
</feature>
<feature type="disulfide bond" evidence="6">
    <location>
        <begin position="2348"/>
        <end position="2440"/>
    </location>
</feature>
<feature type="disulfide bond" evidence="6">
    <location>
        <begin position="2416"/>
        <end position="2432"/>
    </location>
</feature>
<feature type="disulfide bond" evidence="9">
    <location>
        <begin position="2447"/>
        <end position="2490"/>
    </location>
</feature>
<feature type="disulfide bond" evidence="9">
    <location>
        <begin position="2476"/>
        <end position="2503"/>
    </location>
</feature>
<feature type="splice variant" id="VSP_003074" description="In isoform 2 and isoform 3." evidence="26 27">
    <location>
        <begin position="2278"/>
        <end position="2315"/>
    </location>
</feature>
<feature type="splice variant" id="VSP_062493" description="In isoform 4.">
    <original>D</original>
    <variation>DIDECLSSPCLNGATCVDAIDSFTCLCLPSYEGDLCEID</variation>
    <location>
        <position position="2316"/>
    </location>
</feature>
<feature type="splice variant" id="VSP_003075" description="In isoform 3." evidence="26">
    <original>VACGEPPVVEHARTFGQKKDRYEINSLVRYQCTEGFVQRHMPTIRCQPSGHWEEPQITCTDP</original>
    <variation>A</variation>
    <location>
        <begin position="2445"/>
        <end position="2506"/>
    </location>
</feature>
<feature type="sequence variant" id="VAR_056152" description="In dbSNP:rs16942318.">
    <original>D</original>
    <variation>E</variation>
    <location>
        <position position="102"/>
    </location>
</feature>
<feature type="sequence variant" id="VAR_056153" description="In dbSNP:rs34949187.">
    <original>R</original>
    <variation>Q</variation>
    <location>
        <position position="275"/>
    </location>
</feature>
<feature type="sequence variant" id="VAR_080159" description="In dbSNP:rs3743398." evidence="12">
    <original>P</original>
    <variation>L</variation>
    <location>
        <position position="864"/>
    </location>
</feature>
<feature type="sequence variant" id="VAR_080160" description="In dbSNP:rs35430524." evidence="18">
    <original>P</original>
    <variation>T</variation>
    <location>
        <position position="913"/>
    </location>
</feature>
<feature type="sequence variant" id="VAR_080161" description="In dbSNP:rs938608." evidence="12">
    <original>S</original>
    <variation>I</variation>
    <location>
        <position position="930"/>
    </location>
</feature>
<feature type="sequence variant" id="VAR_080162" description="In dbSNP:rs938609." evidence="12">
    <original>S</original>
    <variation>T</variation>
    <location>
        <position position="939"/>
    </location>
</feature>
<feature type="sequence variant" id="VAR_080163" description="In dbSNP:rs373544100." evidence="12">
    <original>T</original>
    <variation>A</variation>
    <location>
        <position position="1080"/>
    </location>
</feature>
<feature type="sequence variant" id="VAR_080164" description="In dbSNP:rs12899191." evidence="12">
    <original>T</original>
    <variation>A</variation>
    <location>
        <position position="1403"/>
    </location>
</feature>
<feature type="sequence variant" id="VAR_080165" description="In dbSNP:rs2882676." evidence="12">
    <original>E</original>
    <variation>A</variation>
    <location>
        <position position="1508"/>
    </location>
</feature>
<feature type="sequence variant" id="VAR_080166" description="In dbSNP:rs4932439." evidence="12 18">
    <original>I</original>
    <variation>V</variation>
    <location>
        <position position="1765"/>
    </location>
</feature>
<feature type="sequence variant" id="VAR_056154" description="In dbSNP:rs35061438.">
    <original>P</original>
    <variation>L</variation>
    <location>
        <position position="2058"/>
    </location>
</feature>
<feature type="sequence variant" id="VAR_080167" description="In dbSNP:rs1042630." evidence="12 20 25">
    <original>I</original>
    <variation>V</variation>
    <location>
        <position position="2079"/>
    </location>
</feature>
<feature type="sequence variant" id="VAR_056155" description="In dbSNP:rs34153007.">
    <original>S</original>
    <variation>R</variation>
    <location>
        <position position="2120"/>
    </location>
</feature>
<feature type="sequence variant" id="VAR_080168" description="In dbSNP:rs3817428." evidence="12">
    <original>D</original>
    <variation>E</variation>
    <location>
        <position position="2373"/>
    </location>
</feature>
<feature type="sequence variant" id="VAR_063053" description="In SEMDAG; creates a functional N-glycosylation site; does not adversely affect protein trafficking and secretion; dbSNP:rs121913568." evidence="17">
    <original>D</original>
    <variation>N</variation>
    <location>
        <position position="2381"/>
    </location>
</feature>
<feature type="sequence variant" id="VAR_063765" description="In SSOAOD; dbSNP:rs779794758." evidence="19">
    <original>V</original>
    <variation>M</variation>
    <location>
        <position position="2418"/>
    </location>
</feature>
<feature type="sequence variant" id="VAR_080169" description="In dbSNP:rs1126823." evidence="20 25">
    <original>Q</original>
    <variation>R</variation>
    <location>
        <position position="2500"/>
    </location>
</feature>
<feature type="sequence conflict" description="In Ref. 1; AAA62824." evidence="28" ref="1">
    <original>QL</original>
    <variation>HV</variation>
    <location>
        <begin position="285"/>
        <end position="286"/>
    </location>
</feature>
<feature type="sequence conflict" description="In Ref. 1; AAA62824." evidence="28" ref="1">
    <original>LR</original>
    <variation>PG</variation>
    <location>
        <begin position="501"/>
        <end position="502"/>
    </location>
</feature>
<feature type="sequence conflict" description="In Ref. 1; AAA62824." evidence="28" ref="1">
    <location>
        <position position="605"/>
    </location>
</feature>
<feature type="sequence conflict" description="In Ref. 1; AAA62824." evidence="28" ref="1">
    <original>A</original>
    <variation>E</variation>
    <location>
        <position position="767"/>
    </location>
</feature>
<feature type="sequence conflict" description="In Ref. 1; AAA62824." evidence="28" ref="1">
    <original>V</original>
    <variation>E</variation>
    <location>
        <position position="848"/>
    </location>
</feature>
<feature type="sequence conflict" description="In Ref. 3; AAI50625." evidence="28" ref="3">
    <location>
        <begin position="999"/>
        <end position="1017"/>
    </location>
</feature>
<feature type="sequence conflict" description="In Ref. 1; AAA62824." evidence="28" ref="1">
    <location>
        <begin position="1075"/>
        <end position="1188"/>
    </location>
</feature>
<feature type="sequence conflict" description="In Ref. 1; AAA62824." evidence="28" ref="1">
    <original>L</original>
    <variation>V</variation>
    <location>
        <position position="1548"/>
    </location>
</feature>
<feature type="sequence conflict" description="In Ref. 9; CAA35463." evidence="28" ref="9">
    <original>E</original>
    <variation>A</variation>
    <location>
        <position position="2043"/>
    </location>
</feature>
<feature type="sequence conflict" description="In Ref. 10; AAA35726." evidence="28" ref="10">
    <original>P</original>
    <variation>A</variation>
    <location>
        <position position="2185"/>
    </location>
</feature>
<dbReference type="EMBL" id="M55172">
    <property type="protein sequence ID" value="AAA62824.1"/>
    <property type="molecule type" value="mRNA"/>
</dbReference>
<dbReference type="EMBL" id="AC103982">
    <property type="status" value="NOT_ANNOTATED_CDS"/>
    <property type="molecule type" value="Genomic_DNA"/>
</dbReference>
<dbReference type="EMBL" id="BC150624">
    <property type="protein sequence ID" value="AAI50625.1"/>
    <property type="molecule type" value="mRNA"/>
</dbReference>
<dbReference type="EMBL" id="X80278">
    <property type="status" value="NOT_ANNOTATED_CDS"/>
    <property type="molecule type" value="mRNA"/>
</dbReference>
<dbReference type="EMBL" id="S74659">
    <property type="protein sequence ID" value="AAC60643.2"/>
    <property type="molecule type" value="Genomic_DNA"/>
</dbReference>
<dbReference type="EMBL" id="X17406">
    <property type="protein sequence ID" value="CAA35463.1"/>
    <property type="molecule type" value="mRNA"/>
</dbReference>
<dbReference type="EMBL" id="J05062">
    <property type="protein sequence ID" value="AAA35726.1"/>
    <property type="molecule type" value="mRNA"/>
</dbReference>
<dbReference type="CCDS" id="CCDS53970.1">
    <molecule id="P16112-1"/>
</dbReference>
<dbReference type="CCDS" id="CCDS53971.1">
    <molecule id="P16112-3"/>
</dbReference>
<dbReference type="CCDS" id="CCDS92054.1">
    <molecule id="P16112-4"/>
</dbReference>
<dbReference type="CCDS" id="CCDS92056.1">
    <molecule id="P16112-2"/>
</dbReference>
<dbReference type="PIR" id="A39086">
    <property type="entry name" value="A39086"/>
</dbReference>
<dbReference type="RefSeq" id="NP_001126.3">
    <molecule id="P16112-3"/>
    <property type="nucleotide sequence ID" value="NM_001135.4"/>
</dbReference>
<dbReference type="RefSeq" id="NP_001356197.1">
    <molecule id="P16112-4"/>
    <property type="nucleotide sequence ID" value="NM_001369268.1"/>
</dbReference>
<dbReference type="RefSeq" id="NP_001398025.1">
    <molecule id="P16112-2"/>
    <property type="nucleotide sequence ID" value="NM_001411096.1"/>
</dbReference>
<dbReference type="RefSeq" id="NP_037359.3">
    <molecule id="P16112-1"/>
    <property type="nucleotide sequence ID" value="NM_013227.4"/>
</dbReference>
<dbReference type="RefSeq" id="XP_006720482.1">
    <property type="nucleotide sequence ID" value="XM_006720419.1"/>
</dbReference>
<dbReference type="RefSeq" id="XP_011519616.1">
    <property type="nucleotide sequence ID" value="XM_011521314.1"/>
</dbReference>
<dbReference type="PDB" id="4MD4">
    <property type="method" value="X-ray"/>
    <property type="resolution" value="1.95 A"/>
    <property type="chains" value="C=89-103"/>
</dbReference>
<dbReference type="PDB" id="7RDV">
    <property type="method" value="X-ray"/>
    <property type="resolution" value="2.90 A"/>
    <property type="chains" value="H=91-101"/>
</dbReference>
<dbReference type="PDBsum" id="4MD4"/>
<dbReference type="PDBsum" id="7RDV"/>
<dbReference type="SMR" id="P16112"/>
<dbReference type="FunCoup" id="P16112">
    <property type="interactions" value="106"/>
</dbReference>
<dbReference type="IntAct" id="P16112">
    <property type="interactions" value="3"/>
</dbReference>
<dbReference type="MINT" id="P16112"/>
<dbReference type="STRING" id="9606.ENSP00000387356"/>
<dbReference type="DrugBank" id="DB02255">
    <property type="generic name" value="Ilomastat"/>
</dbReference>
<dbReference type="GlyConnect" id="2002">
    <property type="glycosylation" value="3 N-Linked glycans (1 site)"/>
</dbReference>
<dbReference type="GlyCosmos" id="P16112">
    <property type="glycosylation" value="82 sites, 13 glycans"/>
</dbReference>
<dbReference type="GlyGen" id="P16112">
    <property type="glycosylation" value="90 sites, 38 N-linked glycans (4 sites), 8 O-linked glycans (74 sites)"/>
</dbReference>
<dbReference type="iPTMnet" id="P16112"/>
<dbReference type="PhosphoSitePlus" id="P16112"/>
<dbReference type="BioMuta" id="ACAN"/>
<dbReference type="DMDM" id="129886"/>
<dbReference type="jPOST" id="P16112"/>
<dbReference type="MassIVE" id="P16112"/>
<dbReference type="PaxDb" id="9606-ENSP00000387356"/>
<dbReference type="PeptideAtlas" id="P16112"/>
<dbReference type="ProteomicsDB" id="17235"/>
<dbReference type="ProteomicsDB" id="19009"/>
<dbReference type="ProteomicsDB" id="40179"/>
<dbReference type="ProteomicsDB" id="40237"/>
<dbReference type="ProteomicsDB" id="53288">
    <molecule id="P16112-1"/>
</dbReference>
<dbReference type="ProteomicsDB" id="53289">
    <molecule id="P16112-2"/>
</dbReference>
<dbReference type="ProteomicsDB" id="53290">
    <molecule id="P16112-3"/>
</dbReference>
<dbReference type="Antibodypedia" id="4288">
    <property type="antibodies" value="568 antibodies from 33 providers"/>
</dbReference>
<dbReference type="DNASU" id="176"/>
<dbReference type="Ensembl" id="ENST00000352105.11">
    <molecule id="P16112-3"/>
    <property type="protein sequence ID" value="ENSP00000341615.7"/>
    <property type="gene ID" value="ENSG00000157766.19"/>
</dbReference>
<dbReference type="Ensembl" id="ENST00000439576.7">
    <molecule id="P16112-1"/>
    <property type="protein sequence ID" value="ENSP00000387356.2"/>
    <property type="gene ID" value="ENSG00000157766.19"/>
</dbReference>
<dbReference type="Ensembl" id="ENST00000559004.5">
    <molecule id="P16112-2"/>
    <property type="protein sequence ID" value="ENSP00000453499.1"/>
    <property type="gene ID" value="ENSG00000157766.19"/>
</dbReference>
<dbReference type="Ensembl" id="ENST00000560601.4">
    <molecule id="P16112-4"/>
    <property type="protein sequence ID" value="ENSP00000453581.2"/>
    <property type="gene ID" value="ENSG00000157766.19"/>
</dbReference>
<dbReference type="GeneID" id="176"/>
<dbReference type="KEGG" id="hsa:176"/>
<dbReference type="MANE-Select" id="ENST00000560601.4">
    <molecule id="P16112-4"/>
    <property type="protein sequence ID" value="ENSP00000453581.2"/>
    <property type="RefSeq nucleotide sequence ID" value="NM_001369268.1"/>
    <property type="RefSeq protein sequence ID" value="NP_001356197.1"/>
</dbReference>
<dbReference type="UCSC" id="uc010upo.1">
    <property type="organism name" value="human"/>
</dbReference>
<dbReference type="AGR" id="HGNC:319"/>
<dbReference type="CTD" id="176"/>
<dbReference type="DisGeNET" id="176"/>
<dbReference type="GeneCards" id="ACAN"/>
<dbReference type="HGNC" id="HGNC:319">
    <property type="gene designation" value="ACAN"/>
</dbReference>
<dbReference type="HPA" id="ENSG00000157766">
    <property type="expression patterns" value="Tissue enhanced (seminal)"/>
</dbReference>
<dbReference type="MalaCards" id="ACAN"/>
<dbReference type="MIM" id="155760">
    <property type="type" value="gene"/>
</dbReference>
<dbReference type="MIM" id="165800">
    <property type="type" value="phenotype"/>
</dbReference>
<dbReference type="MIM" id="608361">
    <property type="type" value="phenotype"/>
</dbReference>
<dbReference type="MIM" id="612813">
    <property type="type" value="phenotype"/>
</dbReference>
<dbReference type="neXtProt" id="NX_P16112"/>
<dbReference type="OpenTargets" id="ENSG00000157766"/>
<dbReference type="Orphanet" id="251262">
    <property type="disease" value="Familial osteochondritis dissecans"/>
</dbReference>
<dbReference type="Orphanet" id="435804">
    <property type="disease" value="Short stature-advanced bone age-early-onset osteoarthritis syndrome"/>
</dbReference>
<dbReference type="Orphanet" id="171866">
    <property type="disease" value="Spondyloepimetaphyseal dysplasia, aggrecan type"/>
</dbReference>
<dbReference type="Orphanet" id="93283">
    <property type="disease" value="Spondyloepiphyseal dysplasia, Kimberley type"/>
</dbReference>
<dbReference type="PharmGKB" id="PA24616"/>
<dbReference type="VEuPathDB" id="HostDB:ENSG00000157766"/>
<dbReference type="eggNOG" id="ENOG502QUX8">
    <property type="taxonomic scope" value="Eukaryota"/>
</dbReference>
<dbReference type="GeneTree" id="ENSGT00940000155971"/>
<dbReference type="HOGENOM" id="CLU_1232333_0_0_1"/>
<dbReference type="InParanoid" id="P16112"/>
<dbReference type="OMA" id="EDWIVTQ"/>
<dbReference type="OrthoDB" id="418245at2759"/>
<dbReference type="PAN-GO" id="P16112">
    <property type="GO annotations" value="3 GO annotations based on evolutionary models"/>
</dbReference>
<dbReference type="PhylomeDB" id="P16112"/>
<dbReference type="TreeFam" id="TF332134"/>
<dbReference type="PathwayCommons" id="P16112"/>
<dbReference type="Reactome" id="R-HSA-1474228">
    <property type="pathway name" value="Degradation of the extracellular matrix"/>
</dbReference>
<dbReference type="Reactome" id="R-HSA-2022854">
    <property type="pathway name" value="Keratan sulfate biosynthesis"/>
</dbReference>
<dbReference type="Reactome" id="R-HSA-2022857">
    <property type="pathway name" value="Keratan sulfate degradation"/>
</dbReference>
<dbReference type="Reactome" id="R-HSA-3000178">
    <property type="pathway name" value="ECM proteoglycans"/>
</dbReference>
<dbReference type="Reactome" id="R-HSA-3656225">
    <property type="pathway name" value="Defective CHST6 causes MCDC1"/>
</dbReference>
<dbReference type="Reactome" id="R-HSA-3656243">
    <property type="pathway name" value="Defective ST3GAL3 causes MCT12 and EIEE15"/>
</dbReference>
<dbReference type="Reactome" id="R-HSA-3656244">
    <property type="pathway name" value="Defective B4GALT1 causes B4GALT1-CDG (CDG-2d)"/>
</dbReference>
<dbReference type="SignaLink" id="P16112"/>
<dbReference type="SIGNOR" id="P16112"/>
<dbReference type="BioGRID-ORCS" id="176">
    <property type="hits" value="15 hits in 1150 CRISPR screens"/>
</dbReference>
<dbReference type="ChiTaRS" id="ACAN">
    <property type="organism name" value="human"/>
</dbReference>
<dbReference type="EvolutionaryTrace" id="P16112"/>
<dbReference type="GenomeRNAi" id="176"/>
<dbReference type="Pharos" id="P16112">
    <property type="development level" value="Tbio"/>
</dbReference>
<dbReference type="PRO" id="PR:P16112"/>
<dbReference type="Proteomes" id="UP000005640">
    <property type="component" value="Chromosome 15"/>
</dbReference>
<dbReference type="RNAct" id="P16112">
    <property type="molecule type" value="protein"/>
</dbReference>
<dbReference type="Bgee" id="ENSG00000157766">
    <property type="expression patterns" value="Expressed in tibia and 151 other cell types or tissues"/>
</dbReference>
<dbReference type="ExpressionAtlas" id="P16112">
    <property type="expression patterns" value="baseline and differential"/>
</dbReference>
<dbReference type="GO" id="GO:0062023">
    <property type="term" value="C:collagen-containing extracellular matrix"/>
    <property type="evidence" value="ECO:0007005"/>
    <property type="project" value="BHF-UCL"/>
</dbReference>
<dbReference type="GO" id="GO:0005576">
    <property type="term" value="C:extracellular region"/>
    <property type="evidence" value="ECO:0000304"/>
    <property type="project" value="Reactome"/>
</dbReference>
<dbReference type="GO" id="GO:0005615">
    <property type="term" value="C:extracellular space"/>
    <property type="evidence" value="ECO:0000318"/>
    <property type="project" value="GO_Central"/>
</dbReference>
<dbReference type="GO" id="GO:0005796">
    <property type="term" value="C:Golgi lumen"/>
    <property type="evidence" value="ECO:0000304"/>
    <property type="project" value="Reactome"/>
</dbReference>
<dbReference type="GO" id="GO:0043202">
    <property type="term" value="C:lysosomal lumen"/>
    <property type="evidence" value="ECO:0000304"/>
    <property type="project" value="Reactome"/>
</dbReference>
<dbReference type="GO" id="GO:0072534">
    <property type="term" value="C:perineuronal net"/>
    <property type="evidence" value="ECO:0000318"/>
    <property type="project" value="GO_Central"/>
</dbReference>
<dbReference type="GO" id="GO:0045202">
    <property type="term" value="C:synapse"/>
    <property type="evidence" value="ECO:0000318"/>
    <property type="project" value="GO_Central"/>
</dbReference>
<dbReference type="GO" id="GO:0030246">
    <property type="term" value="F:carbohydrate binding"/>
    <property type="evidence" value="ECO:0007669"/>
    <property type="project" value="UniProtKB-KW"/>
</dbReference>
<dbReference type="GO" id="GO:0005201">
    <property type="term" value="F:extracellular matrix structural constituent"/>
    <property type="evidence" value="ECO:0000304"/>
    <property type="project" value="UniProtKB"/>
</dbReference>
<dbReference type="GO" id="GO:0005540">
    <property type="term" value="F:hyaluronic acid binding"/>
    <property type="evidence" value="ECO:0007669"/>
    <property type="project" value="InterPro"/>
</dbReference>
<dbReference type="GO" id="GO:0046872">
    <property type="term" value="F:metal ion binding"/>
    <property type="evidence" value="ECO:0007669"/>
    <property type="project" value="UniProtKB-KW"/>
</dbReference>
<dbReference type="GO" id="GO:0007155">
    <property type="term" value="P:cell adhesion"/>
    <property type="evidence" value="ECO:0007669"/>
    <property type="project" value="InterPro"/>
</dbReference>
<dbReference type="GO" id="GO:0007417">
    <property type="term" value="P:central nervous system development"/>
    <property type="evidence" value="ECO:0000318"/>
    <property type="project" value="GO_Central"/>
</dbReference>
<dbReference type="GO" id="GO:0006508">
    <property type="term" value="P:proteolysis"/>
    <property type="evidence" value="ECO:0000303"/>
    <property type="project" value="UniProtKB"/>
</dbReference>
<dbReference type="GO" id="GO:0001501">
    <property type="term" value="P:skeletal system development"/>
    <property type="evidence" value="ECO:0000318"/>
    <property type="project" value="GO_Central"/>
</dbReference>
<dbReference type="CDD" id="cd00033">
    <property type="entry name" value="CCP"/>
    <property type="match status" value="1"/>
</dbReference>
<dbReference type="CDD" id="cd03588">
    <property type="entry name" value="CLECT_CSPGs"/>
    <property type="match status" value="1"/>
</dbReference>
<dbReference type="CDD" id="cd00054">
    <property type="entry name" value="EGF_CA"/>
    <property type="match status" value="1"/>
</dbReference>
<dbReference type="CDD" id="cd05900">
    <property type="entry name" value="Ig_Aggrecan"/>
    <property type="match status" value="1"/>
</dbReference>
<dbReference type="CDD" id="cd03517">
    <property type="entry name" value="Link_domain_CSPGs_modules_1_3"/>
    <property type="match status" value="2"/>
</dbReference>
<dbReference type="CDD" id="cd03520">
    <property type="entry name" value="Link_domain_CSPGs_modules_2_4"/>
    <property type="match status" value="2"/>
</dbReference>
<dbReference type="FunFam" id="2.10.25.10:FF:000713">
    <property type="entry name" value="Aggrecan core protein"/>
    <property type="match status" value="1"/>
</dbReference>
<dbReference type="FunFam" id="3.10.100.10:FF:000009">
    <property type="entry name" value="Aggrecan core protein"/>
    <property type="match status" value="1"/>
</dbReference>
<dbReference type="FunFam" id="3.10.100.10:FF:000011">
    <property type="entry name" value="Aggrecan core protein"/>
    <property type="match status" value="1"/>
</dbReference>
<dbReference type="FunFam" id="2.60.40.10:FF:000451">
    <property type="entry name" value="aggrecan core protein"/>
    <property type="match status" value="1"/>
</dbReference>
<dbReference type="FunFam" id="3.10.100.10:FF:000002">
    <property type="entry name" value="Hyaluronan proteoglycan link protein 1"/>
    <property type="match status" value="2"/>
</dbReference>
<dbReference type="FunFam" id="2.10.70.10:FF:000003">
    <property type="entry name" value="Versican core protein"/>
    <property type="match status" value="1"/>
</dbReference>
<dbReference type="FunFam" id="3.10.100.10:FF:000003">
    <property type="entry name" value="Versican core protein"/>
    <property type="match status" value="1"/>
</dbReference>
<dbReference type="Gene3D" id="2.10.70.10">
    <property type="entry name" value="Complement Module, domain 1"/>
    <property type="match status" value="1"/>
</dbReference>
<dbReference type="Gene3D" id="2.60.40.10">
    <property type="entry name" value="Immunoglobulins"/>
    <property type="match status" value="1"/>
</dbReference>
<dbReference type="Gene3D" id="2.10.25.10">
    <property type="entry name" value="Laminin"/>
    <property type="match status" value="1"/>
</dbReference>
<dbReference type="Gene3D" id="3.10.100.10">
    <property type="entry name" value="Mannose-Binding Protein A, subunit A"/>
    <property type="match status" value="5"/>
</dbReference>
<dbReference type="InterPro" id="IPR001304">
    <property type="entry name" value="C-type_lectin-like"/>
</dbReference>
<dbReference type="InterPro" id="IPR016186">
    <property type="entry name" value="C-type_lectin-like/link_sf"/>
</dbReference>
<dbReference type="InterPro" id="IPR018378">
    <property type="entry name" value="C-type_lectin_CS"/>
</dbReference>
<dbReference type="InterPro" id="IPR033987">
    <property type="entry name" value="CSPG_CTLD"/>
</dbReference>
<dbReference type="InterPro" id="IPR016187">
    <property type="entry name" value="CTDL_fold"/>
</dbReference>
<dbReference type="InterPro" id="IPR000742">
    <property type="entry name" value="EGF-like_dom"/>
</dbReference>
<dbReference type="InterPro" id="IPR050691">
    <property type="entry name" value="Hyaluronan_bind_Proteoglycan"/>
</dbReference>
<dbReference type="InterPro" id="IPR007110">
    <property type="entry name" value="Ig-like_dom"/>
</dbReference>
<dbReference type="InterPro" id="IPR036179">
    <property type="entry name" value="Ig-like_dom_sf"/>
</dbReference>
<dbReference type="InterPro" id="IPR013783">
    <property type="entry name" value="Ig-like_fold"/>
</dbReference>
<dbReference type="InterPro" id="IPR003006">
    <property type="entry name" value="Ig/MHC_CS"/>
</dbReference>
<dbReference type="InterPro" id="IPR003599">
    <property type="entry name" value="Ig_sub"/>
</dbReference>
<dbReference type="InterPro" id="IPR013106">
    <property type="entry name" value="Ig_V-set"/>
</dbReference>
<dbReference type="InterPro" id="IPR000538">
    <property type="entry name" value="Link_dom"/>
</dbReference>
<dbReference type="InterPro" id="IPR035976">
    <property type="entry name" value="Sushi/SCR/CCP_sf"/>
</dbReference>
<dbReference type="InterPro" id="IPR000436">
    <property type="entry name" value="Sushi_SCR_CCP_dom"/>
</dbReference>
<dbReference type="PANTHER" id="PTHR22804:SF42">
    <property type="entry name" value="AGGRECAN CORE PROTEIN"/>
    <property type="match status" value="1"/>
</dbReference>
<dbReference type="PANTHER" id="PTHR22804">
    <property type="entry name" value="AGGRECAN/VERSICAN PROTEOGLYCAN"/>
    <property type="match status" value="1"/>
</dbReference>
<dbReference type="Pfam" id="PF00059">
    <property type="entry name" value="Lectin_C"/>
    <property type="match status" value="1"/>
</dbReference>
<dbReference type="Pfam" id="PF00084">
    <property type="entry name" value="Sushi"/>
    <property type="match status" value="1"/>
</dbReference>
<dbReference type="Pfam" id="PF07686">
    <property type="entry name" value="V-set"/>
    <property type="match status" value="1"/>
</dbReference>
<dbReference type="Pfam" id="PF00193">
    <property type="entry name" value="Xlink"/>
    <property type="match status" value="4"/>
</dbReference>
<dbReference type="PRINTS" id="PR01265">
    <property type="entry name" value="LINKMODULE"/>
</dbReference>
<dbReference type="SMART" id="SM00032">
    <property type="entry name" value="CCP"/>
    <property type="match status" value="1"/>
</dbReference>
<dbReference type="SMART" id="SM00034">
    <property type="entry name" value="CLECT"/>
    <property type="match status" value="1"/>
</dbReference>
<dbReference type="SMART" id="SM00181">
    <property type="entry name" value="EGF"/>
    <property type="match status" value="1"/>
</dbReference>
<dbReference type="SMART" id="SM00409">
    <property type="entry name" value="IG"/>
    <property type="match status" value="1"/>
</dbReference>
<dbReference type="SMART" id="SM00406">
    <property type="entry name" value="IGv"/>
    <property type="match status" value="1"/>
</dbReference>
<dbReference type="SMART" id="SM00445">
    <property type="entry name" value="LINK"/>
    <property type="match status" value="4"/>
</dbReference>
<dbReference type="SUPFAM" id="SSF56436">
    <property type="entry name" value="C-type lectin-like"/>
    <property type="match status" value="5"/>
</dbReference>
<dbReference type="SUPFAM" id="SSF57535">
    <property type="entry name" value="Complement control module/SCR domain"/>
    <property type="match status" value="1"/>
</dbReference>
<dbReference type="SUPFAM" id="SSF48726">
    <property type="entry name" value="Immunoglobulin"/>
    <property type="match status" value="1"/>
</dbReference>
<dbReference type="PROSITE" id="PS00615">
    <property type="entry name" value="C_TYPE_LECTIN_1"/>
    <property type="match status" value="1"/>
</dbReference>
<dbReference type="PROSITE" id="PS50041">
    <property type="entry name" value="C_TYPE_LECTIN_2"/>
    <property type="match status" value="1"/>
</dbReference>
<dbReference type="PROSITE" id="PS00022">
    <property type="entry name" value="EGF_1"/>
    <property type="match status" value="1"/>
</dbReference>
<dbReference type="PROSITE" id="PS01186">
    <property type="entry name" value="EGF_2"/>
    <property type="match status" value="1"/>
</dbReference>
<dbReference type="PROSITE" id="PS50026">
    <property type="entry name" value="EGF_3"/>
    <property type="match status" value="1"/>
</dbReference>
<dbReference type="PROSITE" id="PS50835">
    <property type="entry name" value="IG_LIKE"/>
    <property type="match status" value="1"/>
</dbReference>
<dbReference type="PROSITE" id="PS00290">
    <property type="entry name" value="IG_MHC"/>
    <property type="match status" value="1"/>
</dbReference>
<dbReference type="PROSITE" id="PS01241">
    <property type="entry name" value="LINK_1"/>
    <property type="match status" value="4"/>
</dbReference>
<dbReference type="PROSITE" id="PS50963">
    <property type="entry name" value="LINK_2"/>
    <property type="match status" value="4"/>
</dbReference>
<dbReference type="PROSITE" id="PS50923">
    <property type="entry name" value="SUSHI"/>
    <property type="match status" value="1"/>
</dbReference>
<comment type="function">
    <text>This proteoglycan is a major component of extracellular matrix of cartilagenous tissues. A major function of this protein is to resist compression in cartilage. It binds avidly to hyaluronic acid via an N-terminal globular region.</text>
</comment>
<comment type="subunit">
    <text evidence="3 4 16">Forms a complex (via covalent bonds) with MATN1; the interaction increases with age of the organism via an increase in occupancy of MATN1 binding sites (By similarity). Interacts with FBLN1 (By similarity). Interacts with COMP (PubMed:17588949).</text>
</comment>
<comment type="interaction">
    <interactant intactId="EBI-9076211">
        <id>P16112</id>
    </interactant>
    <interactant intactId="EBI-77613">
        <id>P05067</id>
        <label>APP</label>
    </interactant>
    <organismsDiffer>false</organismsDiffer>
    <experiments>3</experiments>
</comment>
<comment type="subcellular location">
    <subcellularLocation>
        <location evidence="2">Secreted</location>
        <location evidence="2">Extracellular space</location>
        <location evidence="2">Extracellular matrix</location>
    </subcellularLocation>
</comment>
<comment type="alternative products">
    <event type="alternative splicing"/>
    <isoform>
        <id>P16112-1</id>
        <name>1</name>
        <sequence type="displayed"/>
    </isoform>
    <isoform>
        <id>P16112-2</id>
        <name>2</name>
        <sequence type="described" ref="VSP_003074"/>
    </isoform>
    <isoform>
        <id>P16112-3</id>
        <name>3</name>
        <sequence type="described" ref="VSP_003074 VSP_003075"/>
    </isoform>
    <isoform>
        <id>P16112-4</id>
        <name>4</name>
        <sequence type="described" ref="VSP_062493"/>
    </isoform>
</comment>
<comment type="tissue specificity">
    <text evidence="22 23">Detected in fibroblasts (at protein level) (PubMed:36213313). Restricted to cartilage (PubMed:7524681).</text>
</comment>
<comment type="developmental stage">
    <text>Expression was detected in chondrocytes throughout the developing skeleton.</text>
</comment>
<comment type="domain">
    <text>Two globular domains, G1 and G2, comprise the N-terminus of the proteoglycan, while another globular region, G3, makes up the C-terminus. G1 contains Link domains and thus consists of three disulfide-bonded loop structures designated as the A, B, B' motifs. G2 is similar to G1. The keratan sulfate (KS) and the chondroitin sulfate (CS) attachment domains lie between G2 and G3.</text>
</comment>
<comment type="PTM">
    <text evidence="13 15 21 22 24">Contains mostly chondroitin sulfate, but also keratan sulfate chains, N-linked and O-linked oligosaccharides. The release of aggrecan fragments from articular cartilage into the synovial fluid at all stages of human osteoarthritis is the result of cleavage by aggrecanase.</text>
</comment>
<comment type="disease" evidence="14">
    <disease id="DI-02336">
        <name>Spondyloepiphyseal dysplasia type Kimberley</name>
        <acronym>SEDK</acronym>
        <description>Spondyloepiphyseal dysplasias are a heterogeneous group of congenital chondrodysplasias that specifically affect epiphyses and vertebrae. The autosomal dominant SEDK is associated with premature degenerative arthropathy.</description>
        <dbReference type="MIM" id="608361"/>
    </disease>
    <text>The disease is caused by variants affecting the gene represented in this entry.</text>
</comment>
<comment type="disease" evidence="17">
    <disease id="DI-02539">
        <name>Spondyloepimetaphyseal dysplasia, aggrecan type</name>
        <acronym>SEMDAG</acronym>
        <description>A bone disease characterized by severe short stature, macrocephaly, severe midface hypoplasia, short neck, barrel chest and brachydactyly. The radiological findings comprise long bones with generalized irregular epiphyses with widened metaphyses, especially at the knees, platyspondyly, and multiple cervical-vertebral clefts.</description>
        <dbReference type="MIM" id="612813"/>
    </disease>
    <text>The disease is caused by variants affecting the gene represented in this entry.</text>
</comment>
<comment type="disease" evidence="19">
    <disease id="DI-02814">
        <name>Short stature and advanced bone age, with or without early-onset osteoarthritis and/or osteochondritis dissecans</name>
        <acronym>SSOAOD</acronym>
        <description>An autosomal dominant disease characterized by short stature, advanced bone maturation, early-onset osteoarthritis, and mild dysmorphic features consisting of midface hypoplasia, brachydactyly, broad great toes, and lumbar lordosis. Other features include intervertebral disk disease and osteochondritis dissecans. Osteochondritis dissecans is defined as a separation of cartilage and subchondral bone from the surrounding tissue.</description>
        <dbReference type="MIM" id="165800"/>
    </disease>
    <text>The disease is caused by variants affecting the gene represented in this entry.</text>
</comment>
<comment type="similarity">
    <text evidence="28">Belongs to the aggrecan/versican proteoglycan family.</text>
</comment>
<comment type="online information" name="Functional Glycomics Gateway - Glycan Binding">
    <link uri="http://www.functionalglycomics.org/glycomics/GBPServlet?&amp;operationType=view&amp;cbpId=cbp_hum_Ctlect_351"/>
    <text>Aggrecan</text>
</comment>
<proteinExistence type="evidence at protein level"/>
<protein>
    <recommendedName>
        <fullName>Aggrecan core protein</fullName>
    </recommendedName>
    <alternativeName>
        <fullName>Cartilage-specific proteoglycan core protein</fullName>
        <shortName>CSPCP</shortName>
    </alternativeName>
    <alternativeName>
        <fullName>Chondroitin sulfate proteoglycan core protein 1</fullName>
        <shortName>Chondroitin sulfate proteoglycan 1</shortName>
    </alternativeName>
    <component>
        <recommendedName>
            <fullName>Aggrecan core protein 2</fullName>
        </recommendedName>
    </component>
</protein>
<evidence type="ECO:0000250" key="1">
    <source>
        <dbReference type="UniProtKB" id="P07897"/>
    </source>
</evidence>
<evidence type="ECO:0000250" key="2">
    <source>
        <dbReference type="UniProtKB" id="P07898"/>
    </source>
</evidence>
<evidence type="ECO:0000250" key="3">
    <source>
        <dbReference type="UniProtKB" id="P13608"/>
    </source>
</evidence>
<evidence type="ECO:0000250" key="4">
    <source>
        <dbReference type="UniProtKB" id="Q61282"/>
    </source>
</evidence>
<evidence type="ECO:0000255" key="5"/>
<evidence type="ECO:0000255" key="6">
    <source>
        <dbReference type="PROSITE-ProRule" id="PRU00040"/>
    </source>
</evidence>
<evidence type="ECO:0000255" key="7">
    <source>
        <dbReference type="PROSITE-ProRule" id="PRU00076"/>
    </source>
</evidence>
<evidence type="ECO:0000255" key="8">
    <source>
        <dbReference type="PROSITE-ProRule" id="PRU00114"/>
    </source>
</evidence>
<evidence type="ECO:0000255" key="9">
    <source>
        <dbReference type="PROSITE-ProRule" id="PRU00302"/>
    </source>
</evidence>
<evidence type="ECO:0000255" key="10">
    <source>
        <dbReference type="PROSITE-ProRule" id="PRU00323"/>
    </source>
</evidence>
<evidence type="ECO:0000256" key="11">
    <source>
        <dbReference type="SAM" id="MobiDB-lite"/>
    </source>
</evidence>
<evidence type="ECO:0000269" key="12">
    <source>
    </source>
</evidence>
<evidence type="ECO:0000269" key="13">
    <source>
    </source>
</evidence>
<evidence type="ECO:0000269" key="14">
    <source>
    </source>
</evidence>
<evidence type="ECO:0000269" key="15">
    <source>
    </source>
</evidence>
<evidence type="ECO:0000269" key="16">
    <source>
    </source>
</evidence>
<evidence type="ECO:0000269" key="17">
    <source>
    </source>
</evidence>
<evidence type="ECO:0000269" key="18">
    <source>
    </source>
</evidence>
<evidence type="ECO:0000269" key="19">
    <source>
    </source>
</evidence>
<evidence type="ECO:0000269" key="20">
    <source>
    </source>
</evidence>
<evidence type="ECO:0000269" key="21">
    <source>
    </source>
</evidence>
<evidence type="ECO:0000269" key="22">
    <source>
    </source>
</evidence>
<evidence type="ECO:0000269" key="23">
    <source>
    </source>
</evidence>
<evidence type="ECO:0000269" key="24">
    <source>
    </source>
</evidence>
<evidence type="ECO:0000269" key="25">
    <source>
    </source>
</evidence>
<evidence type="ECO:0000303" key="26">
    <source>
    </source>
</evidence>
<evidence type="ECO:0000303" key="27">
    <source>
    </source>
</evidence>
<evidence type="ECO:0000305" key="28"/>
<evidence type="ECO:0000305" key="29">
    <source>
    </source>
</evidence>
<sequence>MTTLLWVFVTLRVITAAVTVETSDHDNSLSVSIPQPSPLRVLLGTSLTIPCYFIDPMHPVTTAPSTAPLAPRIKWSRVSKEKEVVLLVATEGRVRVNSAYQDKVSLPNYPAIPSDATLEVQSLRSNDSGVYRCEVMHGIEDSEATLEVVVKGIVFHYRAISTRYTLDFDRAQRACLQNSAIIATPEQLQAAYEDGFHQCDAGWLADQTVRYPIHTPREGCYGDKDEFPGVRTYGIRDTNETYDVYCFAEEMEGEVFYATSPEKFTFQEAANECRRLGARLATTGQLYLAWQAGMDMCSAGWLADRSVRYPISKARPNCGGNLLGVRTVYVHANQTGYPDPSSRYDAICYTGEDFVDIPENFFGVGGEEDITVQTVTWPDMELPLPRNITEGEARGSVILTVKPIFEVSPSPLEPEEPFTFAPEIGATAFAEVENETGEATRPWGFPTPGLGPATAFTSEDLVVQVTAVPGQPHLPGGVVFHYRPGPTRYSLTFEEAQQACLRTGAVIASPEQLQAAYEAGYEQCDAGWLRDQTVRYPIVSPRTPCVGDKDSSPGVRTYGVRPSTETYDVYCFVDRLEGEVFFATRLEQFTFQEALEFCESHNATLATTGQLYAAWSRGLDKCYAGWLADGSLRYPIVTPRPACGGDKPGVRTVYLYPNQTGLPDPLSRHHAFCFRGISAVPSPGEEEGGTPTSPSGVEEWIVTQVVPGVAAVPVEEETTAVPSGETTAILEFTTEPENQTEWEPAYTPVGTSPLPGILPTWPPTGAATEESTEGPSATEVPSASEEPSPSEVPFPSEEPSPSEEPFPSVRPFPSVELFPSEEPFPSKEPSPSEEPSASEEPYTPSPPVPSWTELPSSGEESGAPDVSGDFTGSGDVSGHLDFSGQLSGDRASGLPSGDLDSSGLTSTVGSGLPVESGLPSGDEERIEWPSTPTVGELPSGAEILEGSASGVGDLSGLPSGEVLETSASGVGDLSGLPSGEVLETTAPGVEDISGLPSGEVLETTAPGVEDISGLPSGEVLETTAPGVEDISGLPSGEVLETTAPGVEDISGLPSGEVLETTAPGVEDISGLPSGEVLETTAPGVEDISGLPSGEVLETAAPGVEDISGLPSGEVLETAAPGVEDISGLPSGEVLETAAPGVEDISGLPSGEVLETAAPGVEDISGLPSGEVLETAAPGVEDISGLPSGEVLETAAPGVEDISGLPSGEVLETAAPGVEDISGLPSGEVLETAAPGVEDISGLPSGEVLETAAPGVEDISGLPSGEVLETAAPGVEDISGLPSGEVLETAAPGVEDISGLPSGEVLETAAPGVEDISGLPSGEVLETAAPGVEDISGLPSGEVLETAAPGVEDISGLPSGEVLETAAPGVEDISGLPSGEVLETAAPGVEDISGLPSGEVLETTAPGVEEISGLPSGEVLETTAPGVDEISGLPSGEVLETTAPGVEEISGLPSGEVLETSTSAVGDLSGLPSGGEVLEISVSGVEDISGLPSGEVVETSASGIEDVSELPSGEGLETSASGVEDLSRLPSGEEVLEISASGFGDLSGLPSGGEGLETSASEVGTDLSGLPSGREGLETSASGAEDLSGLPSGKEDLVGSASGDLDLGKLPSGTLGSGQAPETSGLPSGFSGEYSGVDLGSGPPSGLPDFSGLPSGFPTVSLVDSTLVEVVTASTASELEGRGTIGISGAGEISGLPSSELDISGRASGLPSGTELSGQASGSPDVSGEIPGLFGVSGQPSGFPDTSGETSGVTELSGLSSGQPGISGEASGVLYGTSQPFGITDLSGETSGVPDLSGQPSGLPGFSGATSGVPDLVSGTTSGSGESSGITFVDTSLVEVAPTTFKEEEGLGSVELSGLPSGEADLSGKSGMVDVSGQFSGTVDSSGFTSQTPEFSGLPSGIAEVSGESSRAEIGSSLPSGAYYGSGTPSSFPTVSLVDRTLVESVTQAPTAQEAGEGPSGILELSGAHSGAPDMSGEHSGFLDLSGLQSGLIEPSGEPPGTPYFSGDFASTTNVSGESSVAMGTSGEASGLPEVTLITSEFVEGVTEPTISQELGQRPPVTHTPQLFESSGKVSTAGDISGATPVLPGSGVEVSSVPESSSETSAYPEAGFGASAAPEASREDSGSPDLSETTSAFHEANLERSSGLGVSGSTLTFQEGEASAAPEVSGESTTTSDVGTEAPGLPSATPTASGDRTEISGDLSGHTSQLGVVISTSIPESEWTQQTQRPAETHLEIESSSLLYSGEETHTVETATSPTDASIPASPEWKRESESTAAAPARSCAEEPCGAGTCKETEGHVICLCPPGYTGEHCNIDQEVCEEGWNKYQGHCYRHFPDRETWVDAERRCREQQSHLSSIVTPEEQEFVNNNAQDYQWIGLNDRTIEGDFRWSDGHPMQFENWRPNQPDNFFAAGEDCVVMIWHEKGEWNDVPCNYHLPFTCKKGTVACGEPPVVEHARTFGQKKDRYEINSLVRYQCTEGFVQRHMPTIRCQPSGHWEEPQITCTDPTTYKRRLQKRSSRHPRRSRPSTAH</sequence>
<reference key="1">
    <citation type="journal article" date="1991" name="J. Biol. Chem.">
        <title>Complete coding sequence and deduced primary structure of the human cartilage large aggregating proteoglycan, aggrecan. Human-specific repeats, and additional alternatively spliced forms.</title>
        <authorList>
            <person name="Doege K.J."/>
            <person name="Sasaki M."/>
            <person name="Kimura T."/>
            <person name="Yamada Y."/>
        </authorList>
    </citation>
    <scope>NUCLEOTIDE SEQUENCE [MRNA] (ISOFORM 3)</scope>
    <scope>VARIANTS THR-913 AND VAL-1765</scope>
    <source>
        <tissue>Chondrocyte</tissue>
    </source>
</reference>
<reference key="2">
    <citation type="journal article" date="2006" name="Nature">
        <title>Analysis of the DNA sequence and duplication history of human chromosome 15.</title>
        <authorList>
            <person name="Zody M.C."/>
            <person name="Garber M."/>
            <person name="Sharpe T."/>
            <person name="Young S.K."/>
            <person name="Rowen L."/>
            <person name="O'Neill K."/>
            <person name="Whittaker C.A."/>
            <person name="Kamal M."/>
            <person name="Chang J.L."/>
            <person name="Cuomo C.A."/>
            <person name="Dewar K."/>
            <person name="FitzGerald M.G."/>
            <person name="Kodira C.D."/>
            <person name="Madan A."/>
            <person name="Qin S."/>
            <person name="Yang X."/>
            <person name="Abbasi N."/>
            <person name="Abouelleil A."/>
            <person name="Arachchi H.M."/>
            <person name="Baradarani L."/>
            <person name="Birditt B."/>
            <person name="Bloom S."/>
            <person name="Bloom T."/>
            <person name="Borowsky M.L."/>
            <person name="Burke J."/>
            <person name="Butler J."/>
            <person name="Cook A."/>
            <person name="DeArellano K."/>
            <person name="DeCaprio D."/>
            <person name="Dorris L. III"/>
            <person name="Dors M."/>
            <person name="Eichler E.E."/>
            <person name="Engels R."/>
            <person name="Fahey J."/>
            <person name="Fleetwood P."/>
            <person name="Friedman C."/>
            <person name="Gearin G."/>
            <person name="Hall J.L."/>
            <person name="Hensley G."/>
            <person name="Johnson E."/>
            <person name="Jones C."/>
            <person name="Kamat A."/>
            <person name="Kaur A."/>
            <person name="Locke D.P."/>
            <person name="Madan A."/>
            <person name="Munson G."/>
            <person name="Jaffe D.B."/>
            <person name="Lui A."/>
            <person name="Macdonald P."/>
            <person name="Mauceli E."/>
            <person name="Naylor J.W."/>
            <person name="Nesbitt R."/>
            <person name="Nicol R."/>
            <person name="O'Leary S.B."/>
            <person name="Ratcliffe A."/>
            <person name="Rounsley S."/>
            <person name="She X."/>
            <person name="Sneddon K.M.B."/>
            <person name="Stewart S."/>
            <person name="Sougnez C."/>
            <person name="Stone S.M."/>
            <person name="Topham K."/>
            <person name="Vincent D."/>
            <person name="Wang S."/>
            <person name="Zimmer A.R."/>
            <person name="Birren B.W."/>
            <person name="Hood L."/>
            <person name="Lander E.S."/>
            <person name="Nusbaum C."/>
        </authorList>
    </citation>
    <scope>NUCLEOTIDE SEQUENCE [LARGE SCALE GENOMIC DNA]</scope>
</reference>
<reference key="3">
    <citation type="journal article" date="2004" name="Genome Res.">
        <title>The status, quality, and expansion of the NIH full-length cDNA project: the Mammalian Gene Collection (MGC).</title>
        <authorList>
            <consortium name="The MGC Project Team"/>
        </authorList>
    </citation>
    <scope>NUCLEOTIDE SEQUENCE [LARGE SCALE MRNA] (ISOFORM 2)</scope>
    <scope>VARIANTS LEU-864; ILE-930; THR-939; ALA-1080; ALA-1403; ALA-1508; VAL-1765; VAL-2079 AND GLU-2373</scope>
</reference>
<reference key="4">
    <citation type="journal article" date="1995" name="Arch. Biochem. Biophys.">
        <title>Catabolism of aggrecan by explant cultures of human articular cartilage in the presence of retinoic acid.</title>
        <authorList>
            <person name="Ilic M.Z."/>
            <person name="Mok M.T."/>
            <person name="Williamson O.D."/>
            <person name="Campbell M.A."/>
            <person name="Hughes C.E."/>
            <person name="Handley C.J."/>
        </authorList>
    </citation>
    <scope>PROTEIN SEQUENCE OF 17-27 AND 393-403</scope>
    <scope>PROTEOLYTIC PROCESSING BY AGGRECANASE</scope>
</reference>
<reference key="5">
    <citation type="journal article" date="1992" name="J. Clin. Invest.">
        <title>The structure of aggrecan fragments in human synovial fluid. Evidence for the involvement in osteoarthritis of a novel proteinase which cleaves the Glu 373-Ala 374 bond of the interglobular domain.</title>
        <authorList>
            <person name="Sandy J.D."/>
            <person name="Flannery C.R."/>
            <person name="Neame P.J."/>
            <person name="Lohmander L.S."/>
        </authorList>
    </citation>
    <scope>PROTEIN SEQUENCE OF 361-373 AND 393-409</scope>
    <scope>PROTEOLYTIC PROCESSING</scope>
    <scope>GLYCOSYLATION AT THR-371 AND THR-376</scope>
</reference>
<reference key="6">
    <citation type="journal article" date="1994" name="Biochim. Biophys. Acta">
        <title>Analysis of aggrecan and tenascin gene expression in mouse skeletal tissues by northern and in situ hybridization using species specific cDNA probes.</title>
        <authorList>
            <person name="Glumoff V."/>
            <person name="Savontaus M."/>
            <person name="Vehanen J."/>
            <person name="Vuorio E."/>
        </authorList>
    </citation>
    <scope>NUCLEOTIDE SEQUENCE [MRNA] OF 350-497</scope>
    <scope>TISSUE SPECIFICITY</scope>
    <source>
        <tissue>Fetal cartilage</tissue>
    </source>
</reference>
<reference key="7">
    <citation type="journal article" date="1993" name="Arthritis Rheum.">
        <title>The structure of aggrecan fragments in human synovial fluid. Evidence that aggrecanase mediates cartilage degradation in inflammatory joint disease, joint injury, and osteoarthritis.</title>
        <authorList>
            <person name="Lohmander L.S."/>
            <person name="Neame P.J."/>
            <person name="Sandy J.D."/>
        </authorList>
    </citation>
    <scope>PROTEIN SEQUENCE OF 393-409</scope>
    <source>
        <tissue>Synovial fluid</tissue>
    </source>
</reference>
<reference key="8">
    <citation type="journal article" date="1994" name="Matrix Biol.">
        <title>Length variation in the keratan sulfate domain of mammalian aggrecan.</title>
        <authorList>
            <person name="Barry F.P."/>
            <person name="Neame P.J."/>
            <person name="Sasse J."/>
            <person name="Pearson D."/>
        </authorList>
    </citation>
    <scope>NUCLEOTIDE SEQUENCE [GENOMIC DNA] OF 765-866</scope>
    <source>
        <tissue>Blood</tissue>
    </source>
</reference>
<reference key="9">
    <citation type="journal article" date="1996" name="Biochem. J.">
        <title>Age-related changes in the content of the C-terminal region of aggrecan in human articular cartilage.</title>
        <authorList>
            <person name="Dudhia J."/>
            <person name="Davidson C.M."/>
            <person name="Wells T.M."/>
            <person name="Vynios D.H."/>
            <person name="Hardingham T.E."/>
            <person name="Bayliss M.T."/>
        </authorList>
    </citation>
    <scope>NUCLEOTIDE SEQUENCE [MRNA] OF 1893-2530 (ISOFORM 2)</scope>
    <scope>VARIANTS VAL-2079 AND ARG-2500</scope>
    <source>
        <tissue>Chondrocyte</tissue>
    </source>
</reference>
<reference key="10">
    <citation type="journal article" date="1989" name="J. Biol. Chem.">
        <title>A new epidermal growth factor-like domain in the human core protein for the large cartilage-specific proteoglycan. Evidence for alternative splicing of the domain.</title>
        <authorList>
            <person name="Baldwin C.T."/>
            <person name="Reginato A.M."/>
            <person name="Prockop D.J."/>
        </authorList>
    </citation>
    <scope>NUCLEOTIDE SEQUENCE [MRNA] OF 2051-2530 (ISOFORM 1)</scope>
    <scope>VARIANTS VAL-2079 AND ARG-2500</scope>
</reference>
<reference key="11">
    <citation type="journal article" date="2005" name="Am. J. Hum. Genet.">
        <title>A mutation in the variable repeat region of the aggrecan gene (AGC1) causes a form of spondyloepiphyseal dysplasia associated with severe, premature osteoarthritis.</title>
        <authorList>
            <person name="Gleghorn L."/>
            <person name="Ramesar R."/>
            <person name="Beighton P."/>
            <person name="Wallis G."/>
        </authorList>
    </citation>
    <scope>INVOLVEMENT IN SEDK</scope>
</reference>
<reference key="12">
    <citation type="journal article" date="2005" name="J. Proteome Res.">
        <title>Human plasma N-glycoproteome analysis by immunoaffinity subtraction, hydrazide chemistry, and mass spectrometry.</title>
        <authorList>
            <person name="Liu T."/>
            <person name="Qian W.-J."/>
            <person name="Gritsenko M.A."/>
            <person name="Camp D.G. II"/>
            <person name="Monroe M.E."/>
            <person name="Moore R.J."/>
            <person name="Smith R.D."/>
        </authorList>
    </citation>
    <scope>GLYCOSYLATION [LARGE SCALE ANALYSIS] AT ASN-658</scope>
    <source>
        <tissue>Plasma</tissue>
    </source>
</reference>
<reference key="13">
    <citation type="journal article" date="2007" name="J. Biol. Chem.">
        <title>Interaction of cartilage oligomeric matrix protein/thrombospondin 5 with aggrecan.</title>
        <authorList>
            <person name="Chen F.-H."/>
            <person name="Herndon M.E."/>
            <person name="Patel N."/>
            <person name="Hecht J.T."/>
            <person name="Tuan R.S."/>
            <person name="Lawler J."/>
        </authorList>
    </citation>
    <scope>INTERACTION WITH COMP</scope>
</reference>
<reference key="14">
    <citation type="journal article" date="2020" name="Glycobiology">
        <title>An affinity chromatography and glycoproteomics workflow to profile the chondroitin sulfate proteoglycans that interact with malarial VAR2CSA in the placenta and in cancer.</title>
        <authorList>
            <person name="Toledo A.G."/>
            <person name="Pihl J."/>
            <person name="Spliid C.B."/>
            <person name="Persson A."/>
            <person name="Nilsson J."/>
            <person name="Pereira M.A."/>
            <person name="Gustavsson T."/>
            <person name="Choudhary S."/>
            <person name="Oo H.Z."/>
            <person name="Black P.C."/>
            <person name="Daugaard M."/>
            <person name="Esko J.D."/>
            <person name="Larson G."/>
            <person name="Salanti A."/>
            <person name="Clausen T.M."/>
        </authorList>
    </citation>
    <scope>GLYCOSYLATION</scope>
</reference>
<reference key="15">
    <citation type="journal article" date="2022" name="J. Proteins Proteom.">
        <title>Mass spectrometric analysis of chondroitin sulfate-linked peptides.</title>
        <authorList>
            <person name="Ramarajan M.G."/>
            <person name="Saraswat M."/>
            <person name="Budhraja R."/>
            <person name="Garapati K."/>
            <person name="Raymond K."/>
            <person name="Pandey A."/>
        </authorList>
    </citation>
    <scope>TISSUE SPECIFICITY</scope>
    <scope>GLYCOSYLATION AT SER-1530; SER-1567; SER-1601 AND SER-1703</scope>
</reference>
<reference key="16">
    <citation type="journal article" date="2009" name="Am. J. Hum. Genet.">
        <title>A recessive skeletal dysplasia, SEMD aggrecan type, results from a missense mutation affecting the C-type lectin domain of aggrecan.</title>
        <authorList>
            <person name="Tompson S.W."/>
            <person name="Merriman B."/>
            <person name="Funari V.A."/>
            <person name="Fresquet M."/>
            <person name="Lachman R.S."/>
            <person name="Rimoin D.L."/>
            <person name="Nelson S.F."/>
            <person name="Briggs M.D."/>
            <person name="Cohn D.H."/>
            <person name="Krakow D."/>
        </authorList>
    </citation>
    <scope>VARIANT SEMDAG ASN-2381</scope>
    <scope>CHARACTERIZATION OF VARIANT SEMDAG ASN-2381</scope>
</reference>
<reference key="17">
    <citation type="journal article" date="2010" name="Am. J. Hum. Genet.">
        <title>A missense mutation in the aggrecan C-type lectin domain disrupts extracellular matrix interactions and causes dominant familial osteochondritis dissecans.</title>
        <authorList>
            <person name="Stattin E.L."/>
            <person name="Wiklund F."/>
            <person name="Lindblom K."/>
            <person name="Onnerfjord P."/>
            <person name="Jonsson B.A."/>
            <person name="Tegner Y."/>
            <person name="Sasaki T."/>
            <person name="Struglics A."/>
            <person name="Lohmander S."/>
            <person name="Dahl N."/>
            <person name="Heinegard D."/>
            <person name="Aspberg A."/>
        </authorList>
    </citation>
    <scope>VARIANT SSOAOD MET-2418</scope>
    <scope>DETECTION OF VARIANT SSOAOD MET-2418 BY MASS SPECTROMETRY</scope>
</reference>
<organism>
    <name type="scientific">Homo sapiens</name>
    <name type="common">Human</name>
    <dbReference type="NCBI Taxonomy" id="9606"/>
    <lineage>
        <taxon>Eukaryota</taxon>
        <taxon>Metazoa</taxon>
        <taxon>Chordata</taxon>
        <taxon>Craniata</taxon>
        <taxon>Vertebrata</taxon>
        <taxon>Euteleostomi</taxon>
        <taxon>Mammalia</taxon>
        <taxon>Eutheria</taxon>
        <taxon>Euarchontoglires</taxon>
        <taxon>Primates</taxon>
        <taxon>Haplorrhini</taxon>
        <taxon>Catarrhini</taxon>
        <taxon>Hominidae</taxon>
        <taxon>Homo</taxon>
    </lineage>
</organism>